<reference key="1">
    <citation type="submission" date="2005-08" db="EMBL/GenBank/DDBJ databases">
        <title>Complete sequence of Chlorobium chlorochromatii CaD3.</title>
        <authorList>
            <consortium name="US DOE Joint Genome Institute"/>
            <person name="Copeland A."/>
            <person name="Lucas S."/>
            <person name="Lapidus A."/>
            <person name="Barry K."/>
            <person name="Detter J.C."/>
            <person name="Glavina T."/>
            <person name="Hammon N."/>
            <person name="Israni S."/>
            <person name="Pitluck S."/>
            <person name="Bryant D."/>
            <person name="Schmutz J."/>
            <person name="Larimer F."/>
            <person name="Land M."/>
            <person name="Kyrpides N."/>
            <person name="Ivanova N."/>
            <person name="Richardson P."/>
        </authorList>
    </citation>
    <scope>NUCLEOTIDE SEQUENCE [LARGE SCALE GENOMIC DNA]</scope>
    <source>
        <strain>CaD3</strain>
    </source>
</reference>
<proteinExistence type="inferred from homology"/>
<comment type="function">
    <text evidence="1">Catalyzes the condensation of pantoate with beta-alanine in an ATP-dependent reaction via a pantoyl-adenylate intermediate.</text>
</comment>
<comment type="catalytic activity">
    <reaction evidence="1">
        <text>(R)-pantoate + beta-alanine + ATP = (R)-pantothenate + AMP + diphosphate + H(+)</text>
        <dbReference type="Rhea" id="RHEA:10912"/>
        <dbReference type="ChEBI" id="CHEBI:15378"/>
        <dbReference type="ChEBI" id="CHEBI:15980"/>
        <dbReference type="ChEBI" id="CHEBI:29032"/>
        <dbReference type="ChEBI" id="CHEBI:30616"/>
        <dbReference type="ChEBI" id="CHEBI:33019"/>
        <dbReference type="ChEBI" id="CHEBI:57966"/>
        <dbReference type="ChEBI" id="CHEBI:456215"/>
        <dbReference type="EC" id="6.3.2.1"/>
    </reaction>
</comment>
<comment type="pathway">
    <text evidence="1">Cofactor biosynthesis; (R)-pantothenate biosynthesis; (R)-pantothenate from (R)-pantoate and beta-alanine: step 1/1.</text>
</comment>
<comment type="subunit">
    <text evidence="1">Homodimer.</text>
</comment>
<comment type="subcellular location">
    <subcellularLocation>
        <location evidence="1">Cytoplasm</location>
    </subcellularLocation>
</comment>
<comment type="miscellaneous">
    <text evidence="1">The reaction proceeds by a bi uni uni bi ping pong mechanism.</text>
</comment>
<comment type="similarity">
    <text evidence="1">Belongs to the pantothenate synthetase family.</text>
</comment>
<evidence type="ECO:0000255" key="1">
    <source>
        <dbReference type="HAMAP-Rule" id="MF_00158"/>
    </source>
</evidence>
<protein>
    <recommendedName>
        <fullName evidence="1">Pantothenate synthetase</fullName>
        <shortName evidence="1">PS</shortName>
        <ecNumber evidence="1">6.3.2.1</ecNumber>
    </recommendedName>
    <alternativeName>
        <fullName evidence="1">Pantoate--beta-alanine ligase</fullName>
    </alternativeName>
    <alternativeName>
        <fullName evidence="1">Pantoate-activating enzyme</fullName>
    </alternativeName>
</protein>
<organism>
    <name type="scientific">Chlorobium chlorochromatii (strain CaD3)</name>
    <dbReference type="NCBI Taxonomy" id="340177"/>
    <lineage>
        <taxon>Bacteria</taxon>
        <taxon>Pseudomonadati</taxon>
        <taxon>Chlorobiota</taxon>
        <taxon>Chlorobiia</taxon>
        <taxon>Chlorobiales</taxon>
        <taxon>Chlorobiaceae</taxon>
        <taxon>Chlorobium/Pelodictyon group</taxon>
        <taxon>Chlorobium</taxon>
    </lineage>
</organism>
<dbReference type="EC" id="6.3.2.1" evidence="1"/>
<dbReference type="EMBL" id="CP000108">
    <property type="protein sequence ID" value="ABB28958.1"/>
    <property type="molecule type" value="Genomic_DNA"/>
</dbReference>
<dbReference type="SMR" id="Q3APW7"/>
<dbReference type="STRING" id="340177.Cag_1707"/>
<dbReference type="KEGG" id="cch:Cag_1707"/>
<dbReference type="eggNOG" id="COG0414">
    <property type="taxonomic scope" value="Bacteria"/>
</dbReference>
<dbReference type="HOGENOM" id="CLU_047148_0_0_10"/>
<dbReference type="OrthoDB" id="9773087at2"/>
<dbReference type="UniPathway" id="UPA00028">
    <property type="reaction ID" value="UER00005"/>
</dbReference>
<dbReference type="GO" id="GO:0005829">
    <property type="term" value="C:cytosol"/>
    <property type="evidence" value="ECO:0007669"/>
    <property type="project" value="TreeGrafter"/>
</dbReference>
<dbReference type="GO" id="GO:0005524">
    <property type="term" value="F:ATP binding"/>
    <property type="evidence" value="ECO:0007669"/>
    <property type="project" value="UniProtKB-KW"/>
</dbReference>
<dbReference type="GO" id="GO:0004592">
    <property type="term" value="F:pantoate-beta-alanine ligase activity"/>
    <property type="evidence" value="ECO:0007669"/>
    <property type="project" value="UniProtKB-UniRule"/>
</dbReference>
<dbReference type="GO" id="GO:0015940">
    <property type="term" value="P:pantothenate biosynthetic process"/>
    <property type="evidence" value="ECO:0007669"/>
    <property type="project" value="UniProtKB-UniRule"/>
</dbReference>
<dbReference type="CDD" id="cd00560">
    <property type="entry name" value="PanC"/>
    <property type="match status" value="1"/>
</dbReference>
<dbReference type="FunFam" id="3.40.50.620:FF:000114">
    <property type="entry name" value="Pantothenate synthetase"/>
    <property type="match status" value="1"/>
</dbReference>
<dbReference type="Gene3D" id="3.40.50.620">
    <property type="entry name" value="HUPs"/>
    <property type="match status" value="1"/>
</dbReference>
<dbReference type="Gene3D" id="3.30.1300.10">
    <property type="entry name" value="Pantoate-beta-alanine ligase, C-terminal domain"/>
    <property type="match status" value="1"/>
</dbReference>
<dbReference type="HAMAP" id="MF_00158">
    <property type="entry name" value="PanC"/>
    <property type="match status" value="1"/>
</dbReference>
<dbReference type="InterPro" id="IPR003721">
    <property type="entry name" value="Pantoate_ligase"/>
</dbReference>
<dbReference type="InterPro" id="IPR042176">
    <property type="entry name" value="Pantoate_ligase_C"/>
</dbReference>
<dbReference type="InterPro" id="IPR014729">
    <property type="entry name" value="Rossmann-like_a/b/a_fold"/>
</dbReference>
<dbReference type="NCBIfam" id="TIGR00018">
    <property type="entry name" value="panC"/>
    <property type="match status" value="1"/>
</dbReference>
<dbReference type="PANTHER" id="PTHR21299">
    <property type="entry name" value="CYTIDYLATE KINASE/PANTOATE-BETA-ALANINE LIGASE"/>
    <property type="match status" value="1"/>
</dbReference>
<dbReference type="PANTHER" id="PTHR21299:SF1">
    <property type="entry name" value="PANTOATE--BETA-ALANINE LIGASE"/>
    <property type="match status" value="1"/>
</dbReference>
<dbReference type="Pfam" id="PF02569">
    <property type="entry name" value="Pantoate_ligase"/>
    <property type="match status" value="1"/>
</dbReference>
<dbReference type="SUPFAM" id="SSF52374">
    <property type="entry name" value="Nucleotidylyl transferase"/>
    <property type="match status" value="1"/>
</dbReference>
<accession>Q3APW7</accession>
<gene>
    <name evidence="1" type="primary">panC</name>
    <name type="ordered locus">Cag_1707</name>
</gene>
<sequence>MQIISDPHAMQAISENVRLQGKRLAVVMTMGALHEGHISLVTLARKSADTVIMTLFVNPTQFSAGEDLERYPRPFEQDVAHAEAAGVDYLFAPTSAEMYPAGHQTSVQCGALAERFEGAHRSGHFNGVATVVTKLLHITKPHTAIFGEKDAQQLAIIRQLVADLLIDVEIIGAPIVREADGLAKSSRNIYLSSNERKRATVLYGGLCHAKARLAEGEQNLKLIATEVEALITATEGCTIDYVAFVDEATFLPIEQADASKRYRLLLAVRLGSVRLIDNMVMGTKDSYKPC</sequence>
<feature type="chain" id="PRO_0000305423" description="Pantothenate synthetase">
    <location>
        <begin position="1"/>
        <end position="290"/>
    </location>
</feature>
<feature type="active site" description="Proton donor" evidence="1">
    <location>
        <position position="37"/>
    </location>
</feature>
<feature type="binding site" evidence="1">
    <location>
        <begin position="30"/>
        <end position="37"/>
    </location>
    <ligand>
        <name>ATP</name>
        <dbReference type="ChEBI" id="CHEBI:30616"/>
    </ligand>
</feature>
<feature type="binding site" evidence="1">
    <location>
        <position position="61"/>
    </location>
    <ligand>
        <name>(R)-pantoate</name>
        <dbReference type="ChEBI" id="CHEBI:15980"/>
    </ligand>
</feature>
<feature type="binding site" evidence="1">
    <location>
        <position position="61"/>
    </location>
    <ligand>
        <name>beta-alanine</name>
        <dbReference type="ChEBI" id="CHEBI:57966"/>
    </ligand>
</feature>
<feature type="binding site" evidence="1">
    <location>
        <begin position="147"/>
        <end position="150"/>
    </location>
    <ligand>
        <name>ATP</name>
        <dbReference type="ChEBI" id="CHEBI:30616"/>
    </ligand>
</feature>
<feature type="binding site" evidence="1">
    <location>
        <position position="153"/>
    </location>
    <ligand>
        <name>(R)-pantoate</name>
        <dbReference type="ChEBI" id="CHEBI:15980"/>
    </ligand>
</feature>
<feature type="binding site" evidence="1">
    <location>
        <position position="176"/>
    </location>
    <ligand>
        <name>ATP</name>
        <dbReference type="ChEBI" id="CHEBI:30616"/>
    </ligand>
</feature>
<feature type="binding site" evidence="1">
    <location>
        <begin position="184"/>
        <end position="187"/>
    </location>
    <ligand>
        <name>ATP</name>
        <dbReference type="ChEBI" id="CHEBI:30616"/>
    </ligand>
</feature>
<keyword id="KW-0067">ATP-binding</keyword>
<keyword id="KW-0963">Cytoplasm</keyword>
<keyword id="KW-0436">Ligase</keyword>
<keyword id="KW-0547">Nucleotide-binding</keyword>
<keyword id="KW-0566">Pantothenate biosynthesis</keyword>
<name>PANC_CHLCH</name>